<comment type="similarity">
    <text evidence="1">Belongs to the bacterial ribosomal protein bL27 family.</text>
</comment>
<gene>
    <name evidence="1" type="primary">rpmA</name>
    <name type="ordered locus">ERGA_CDS_04940</name>
</gene>
<proteinExistence type="inferred from homology"/>
<accession>Q5FH97</accession>
<organism>
    <name type="scientific">Ehrlichia ruminantium (strain Gardel)</name>
    <dbReference type="NCBI Taxonomy" id="302409"/>
    <lineage>
        <taxon>Bacteria</taxon>
        <taxon>Pseudomonadati</taxon>
        <taxon>Pseudomonadota</taxon>
        <taxon>Alphaproteobacteria</taxon>
        <taxon>Rickettsiales</taxon>
        <taxon>Anaplasmataceae</taxon>
        <taxon>Ehrlichia</taxon>
    </lineage>
</organism>
<protein>
    <recommendedName>
        <fullName evidence="1">Large ribosomal subunit protein bL27</fullName>
    </recommendedName>
    <alternativeName>
        <fullName evidence="3">50S ribosomal protein L27</fullName>
    </alternativeName>
</protein>
<name>RL27_EHRRG</name>
<reference key="1">
    <citation type="journal article" date="2006" name="J. Bacteriol.">
        <title>Comparative genomic analysis of three strains of Ehrlichia ruminantium reveals an active process of genome size plasticity.</title>
        <authorList>
            <person name="Frutos R."/>
            <person name="Viari A."/>
            <person name="Ferraz C."/>
            <person name="Morgat A."/>
            <person name="Eychenie S."/>
            <person name="Kandassamy Y."/>
            <person name="Chantal I."/>
            <person name="Bensaid A."/>
            <person name="Coissac E."/>
            <person name="Vachiery N."/>
            <person name="Demaille J."/>
            <person name="Martinez D."/>
        </authorList>
    </citation>
    <scope>NUCLEOTIDE SEQUENCE [LARGE SCALE GENOMIC DNA]</scope>
    <source>
        <strain>Gardel</strain>
    </source>
</reference>
<sequence>MATKKSGGSSSNGRDSRGRRLGVKKFGSEKVIPGNIIIRQRGTKYHPGRNVGIGKDHTIFSKVSGVVYFRKGALNKTFVDVLEVNSAS</sequence>
<evidence type="ECO:0000255" key="1">
    <source>
        <dbReference type="HAMAP-Rule" id="MF_00539"/>
    </source>
</evidence>
<evidence type="ECO:0000256" key="2">
    <source>
        <dbReference type="SAM" id="MobiDB-lite"/>
    </source>
</evidence>
<evidence type="ECO:0000305" key="3"/>
<feature type="chain" id="PRO_1000017474" description="Large ribosomal subunit protein bL27">
    <location>
        <begin position="1"/>
        <end position="88"/>
    </location>
</feature>
<feature type="region of interest" description="Disordered" evidence="2">
    <location>
        <begin position="1"/>
        <end position="24"/>
    </location>
</feature>
<feature type="compositionally biased region" description="Low complexity" evidence="2">
    <location>
        <begin position="1"/>
        <end position="13"/>
    </location>
</feature>
<dbReference type="EMBL" id="CR925677">
    <property type="protein sequence ID" value="CAI27946.1"/>
    <property type="molecule type" value="Genomic_DNA"/>
</dbReference>
<dbReference type="RefSeq" id="WP_011155163.1">
    <property type="nucleotide sequence ID" value="NC_006831.1"/>
</dbReference>
<dbReference type="SMR" id="Q5FH97"/>
<dbReference type="GeneID" id="33057999"/>
<dbReference type="KEGG" id="erg:ERGA_CDS_04940"/>
<dbReference type="HOGENOM" id="CLU_095424_4_1_5"/>
<dbReference type="OrthoDB" id="9803474at2"/>
<dbReference type="Proteomes" id="UP000000533">
    <property type="component" value="Chromosome"/>
</dbReference>
<dbReference type="GO" id="GO:1990904">
    <property type="term" value="C:ribonucleoprotein complex"/>
    <property type="evidence" value="ECO:0007669"/>
    <property type="project" value="UniProtKB-KW"/>
</dbReference>
<dbReference type="GO" id="GO:0005840">
    <property type="term" value="C:ribosome"/>
    <property type="evidence" value="ECO:0007669"/>
    <property type="project" value="UniProtKB-KW"/>
</dbReference>
<dbReference type="GO" id="GO:0003735">
    <property type="term" value="F:structural constituent of ribosome"/>
    <property type="evidence" value="ECO:0007669"/>
    <property type="project" value="InterPro"/>
</dbReference>
<dbReference type="GO" id="GO:0006412">
    <property type="term" value="P:translation"/>
    <property type="evidence" value="ECO:0007669"/>
    <property type="project" value="UniProtKB-UniRule"/>
</dbReference>
<dbReference type="FunFam" id="2.40.50.100:FF:000020">
    <property type="entry name" value="50S ribosomal protein L27"/>
    <property type="match status" value="1"/>
</dbReference>
<dbReference type="Gene3D" id="2.40.50.100">
    <property type="match status" value="1"/>
</dbReference>
<dbReference type="HAMAP" id="MF_00539">
    <property type="entry name" value="Ribosomal_bL27"/>
    <property type="match status" value="1"/>
</dbReference>
<dbReference type="InterPro" id="IPR001684">
    <property type="entry name" value="Ribosomal_bL27"/>
</dbReference>
<dbReference type="InterPro" id="IPR018261">
    <property type="entry name" value="Ribosomal_bL27_CS"/>
</dbReference>
<dbReference type="NCBIfam" id="TIGR00062">
    <property type="entry name" value="L27"/>
    <property type="match status" value="1"/>
</dbReference>
<dbReference type="PANTHER" id="PTHR15893:SF0">
    <property type="entry name" value="LARGE RIBOSOMAL SUBUNIT PROTEIN BL27M"/>
    <property type="match status" value="1"/>
</dbReference>
<dbReference type="PANTHER" id="PTHR15893">
    <property type="entry name" value="RIBOSOMAL PROTEIN L27"/>
    <property type="match status" value="1"/>
</dbReference>
<dbReference type="Pfam" id="PF01016">
    <property type="entry name" value="Ribosomal_L27"/>
    <property type="match status" value="1"/>
</dbReference>
<dbReference type="PRINTS" id="PR00063">
    <property type="entry name" value="RIBOSOMALL27"/>
</dbReference>
<dbReference type="SUPFAM" id="SSF110324">
    <property type="entry name" value="Ribosomal L27 protein-like"/>
    <property type="match status" value="1"/>
</dbReference>
<dbReference type="PROSITE" id="PS00831">
    <property type="entry name" value="RIBOSOMAL_L27"/>
    <property type="match status" value="1"/>
</dbReference>
<keyword id="KW-0687">Ribonucleoprotein</keyword>
<keyword id="KW-0689">Ribosomal protein</keyword>